<name>MFRN2_HUMAN</name>
<dbReference type="EMBL" id="AF327402">
    <property type="protein sequence ID" value="AAK49519.1"/>
    <property type="molecule type" value="mRNA"/>
</dbReference>
<dbReference type="EMBL" id="AF327403">
    <property type="protein sequence ID" value="AAK49520.1"/>
    <property type="molecule type" value="mRNA"/>
</dbReference>
<dbReference type="EMBL" id="AJ303077">
    <property type="protein sequence ID" value="CAC27996.1"/>
    <property type="molecule type" value="mRNA"/>
</dbReference>
<dbReference type="EMBL" id="AJ303078">
    <property type="protein sequence ID" value="CAC27997.1"/>
    <property type="molecule type" value="mRNA"/>
</dbReference>
<dbReference type="EMBL" id="AF267854">
    <property type="protein sequence ID" value="AAG44723.1"/>
    <property type="molecule type" value="mRNA"/>
</dbReference>
<dbReference type="EMBL" id="AL831943">
    <property type="protein sequence ID" value="CAH10774.1"/>
    <property type="molecule type" value="mRNA"/>
</dbReference>
<dbReference type="EMBL" id="AL353719">
    <property type="status" value="NOT_ANNOTATED_CDS"/>
    <property type="molecule type" value="Genomic_DNA"/>
</dbReference>
<dbReference type="EMBL" id="BC047312">
    <property type="protein sequence ID" value="AAH47312.1"/>
    <property type="status" value="ALT_INIT"/>
    <property type="molecule type" value="mRNA"/>
</dbReference>
<dbReference type="EMBL" id="BC058937">
    <property type="protein sequence ID" value="AAH58937.1"/>
    <property type="molecule type" value="mRNA"/>
</dbReference>
<dbReference type="EMBL" id="BC076399">
    <property type="protein sequence ID" value="AAH76399.1"/>
    <property type="molecule type" value="mRNA"/>
</dbReference>
<dbReference type="EMBL" id="BC094821">
    <property type="protein sequence ID" value="AAH94821.1"/>
    <property type="molecule type" value="mRNA"/>
</dbReference>
<dbReference type="CCDS" id="CCDS41559.1">
    <molecule id="Q96A46-1"/>
</dbReference>
<dbReference type="RefSeq" id="NP_112489.3">
    <molecule id="Q96A46-1"/>
    <property type="nucleotide sequence ID" value="NM_031212.3"/>
</dbReference>
<dbReference type="SMR" id="Q96A46"/>
<dbReference type="BioGRID" id="123626">
    <property type="interactions" value="35"/>
</dbReference>
<dbReference type="FunCoup" id="Q96A46">
    <property type="interactions" value="2077"/>
</dbReference>
<dbReference type="IntAct" id="Q96A46">
    <property type="interactions" value="7"/>
</dbReference>
<dbReference type="MINT" id="Q96A46"/>
<dbReference type="STRING" id="9606.ENSP00000359526"/>
<dbReference type="TCDB" id="2.A.29.5.8">
    <property type="family name" value="the mitochondrial carrier (mc) family"/>
</dbReference>
<dbReference type="iPTMnet" id="Q96A46"/>
<dbReference type="PhosphoSitePlus" id="Q96A46"/>
<dbReference type="BioMuta" id="SLC25A28"/>
<dbReference type="DMDM" id="74751734"/>
<dbReference type="jPOST" id="Q96A46"/>
<dbReference type="MassIVE" id="Q96A46"/>
<dbReference type="PaxDb" id="9606-ENSP00000359526"/>
<dbReference type="PeptideAtlas" id="Q96A46"/>
<dbReference type="ProteomicsDB" id="75908">
    <molecule id="Q96A46-1"/>
</dbReference>
<dbReference type="ProteomicsDB" id="75909">
    <molecule id="Q96A46-2"/>
</dbReference>
<dbReference type="ProteomicsDB" id="75910">
    <molecule id="Q96A46-3"/>
</dbReference>
<dbReference type="Pumba" id="Q96A46"/>
<dbReference type="Antibodypedia" id="31086">
    <property type="antibodies" value="132 antibodies from 19 providers"/>
</dbReference>
<dbReference type="DNASU" id="81894"/>
<dbReference type="Ensembl" id="ENST00000370495.6">
    <molecule id="Q96A46-1"/>
    <property type="protein sequence ID" value="ENSP00000359526.4"/>
    <property type="gene ID" value="ENSG00000155287.12"/>
</dbReference>
<dbReference type="GeneID" id="81894"/>
<dbReference type="KEGG" id="hsa:81894"/>
<dbReference type="MANE-Select" id="ENST00000370495.6">
    <property type="protein sequence ID" value="ENSP00000359526.4"/>
    <property type="RefSeq nucleotide sequence ID" value="NM_031212.4"/>
    <property type="RefSeq protein sequence ID" value="NP_112489.3"/>
</dbReference>
<dbReference type="UCSC" id="uc001kpx.3">
    <molecule id="Q96A46-1"/>
    <property type="organism name" value="human"/>
</dbReference>
<dbReference type="AGR" id="HGNC:23472"/>
<dbReference type="CTD" id="81894"/>
<dbReference type="DisGeNET" id="81894"/>
<dbReference type="GeneCards" id="SLC25A28"/>
<dbReference type="HGNC" id="HGNC:23472">
    <property type="gene designation" value="SLC25A28"/>
</dbReference>
<dbReference type="HPA" id="ENSG00000155287">
    <property type="expression patterns" value="Low tissue specificity"/>
</dbReference>
<dbReference type="MIM" id="609767">
    <property type="type" value="gene"/>
</dbReference>
<dbReference type="neXtProt" id="NX_Q96A46"/>
<dbReference type="OpenTargets" id="ENSG00000155287"/>
<dbReference type="PharmGKB" id="PA134867966"/>
<dbReference type="VEuPathDB" id="HostDB:ENSG00000155287"/>
<dbReference type="eggNOG" id="KOG0760">
    <property type="taxonomic scope" value="Eukaryota"/>
</dbReference>
<dbReference type="GeneTree" id="ENSGT00940000157049"/>
<dbReference type="HOGENOM" id="CLU_015166_3_1_1"/>
<dbReference type="InParanoid" id="Q96A46"/>
<dbReference type="OMA" id="WRPMRGM"/>
<dbReference type="OrthoDB" id="43906at2759"/>
<dbReference type="PAN-GO" id="Q96A46">
    <property type="GO annotations" value="3 GO annotations based on evolutionary models"/>
</dbReference>
<dbReference type="PhylomeDB" id="Q96A46"/>
<dbReference type="TreeFam" id="TF314118"/>
<dbReference type="PathwayCommons" id="Q96A46"/>
<dbReference type="Reactome" id="R-HSA-1362409">
    <property type="pathway name" value="Mitochondrial iron-sulfur cluster biogenesis"/>
</dbReference>
<dbReference type="SignaLink" id="Q96A46"/>
<dbReference type="BioGRID-ORCS" id="81894">
    <property type="hits" value="164 hits in 1163 CRISPR screens"/>
</dbReference>
<dbReference type="ChiTaRS" id="SLC25A28">
    <property type="organism name" value="human"/>
</dbReference>
<dbReference type="GenomeRNAi" id="81894"/>
<dbReference type="Pharos" id="Q96A46">
    <property type="development level" value="Tbio"/>
</dbReference>
<dbReference type="PRO" id="PR:Q96A46"/>
<dbReference type="Proteomes" id="UP000005640">
    <property type="component" value="Chromosome 10"/>
</dbReference>
<dbReference type="RNAct" id="Q96A46">
    <property type="molecule type" value="protein"/>
</dbReference>
<dbReference type="Bgee" id="ENSG00000155287">
    <property type="expression patterns" value="Expressed in left testis and 191 other cell types or tissues"/>
</dbReference>
<dbReference type="ExpressionAtlas" id="Q96A46">
    <property type="expression patterns" value="baseline and differential"/>
</dbReference>
<dbReference type="GO" id="GO:0005743">
    <property type="term" value="C:mitochondrial inner membrane"/>
    <property type="evidence" value="ECO:0007669"/>
    <property type="project" value="UniProtKB-SubCell"/>
</dbReference>
<dbReference type="GO" id="GO:0031966">
    <property type="term" value="C:mitochondrial membrane"/>
    <property type="evidence" value="ECO:0000318"/>
    <property type="project" value="GO_Central"/>
</dbReference>
<dbReference type="GO" id="GO:0005739">
    <property type="term" value="C:mitochondrion"/>
    <property type="evidence" value="ECO:0006056"/>
    <property type="project" value="FlyBase"/>
</dbReference>
<dbReference type="GO" id="GO:0015093">
    <property type="term" value="F:ferrous iron transmembrane transporter activity"/>
    <property type="evidence" value="ECO:0000318"/>
    <property type="project" value="GO_Central"/>
</dbReference>
<dbReference type="GO" id="GO:0048250">
    <property type="term" value="P:iron import into the mitochondrion"/>
    <property type="evidence" value="ECO:0000318"/>
    <property type="project" value="GO_Central"/>
</dbReference>
<dbReference type="FunFam" id="1.50.40.10:FF:000027">
    <property type="entry name" value="mitoferrin-2 isoform X1"/>
    <property type="match status" value="1"/>
</dbReference>
<dbReference type="FunFam" id="1.50.40.10:FF:000031">
    <property type="entry name" value="mitoferrin-2 isoform X1"/>
    <property type="match status" value="1"/>
</dbReference>
<dbReference type="Gene3D" id="1.50.40.10">
    <property type="entry name" value="Mitochondrial carrier domain"/>
    <property type="match status" value="2"/>
</dbReference>
<dbReference type="InterPro" id="IPR018108">
    <property type="entry name" value="Mitochondrial_sb/sol_carrier"/>
</dbReference>
<dbReference type="InterPro" id="IPR023395">
    <property type="entry name" value="Mt_carrier_dom_sf"/>
</dbReference>
<dbReference type="PANTHER" id="PTHR45758">
    <property type="entry name" value="MITOFERRIN-1-RELATED"/>
    <property type="match status" value="1"/>
</dbReference>
<dbReference type="PANTHER" id="PTHR45758:SF20">
    <property type="entry name" value="MITOFERRIN-2"/>
    <property type="match status" value="1"/>
</dbReference>
<dbReference type="Pfam" id="PF00153">
    <property type="entry name" value="Mito_carr"/>
    <property type="match status" value="3"/>
</dbReference>
<dbReference type="SUPFAM" id="SSF103506">
    <property type="entry name" value="Mitochondrial carrier"/>
    <property type="match status" value="1"/>
</dbReference>
<dbReference type="PROSITE" id="PS50920">
    <property type="entry name" value="SOLCAR"/>
    <property type="match status" value="3"/>
</dbReference>
<evidence type="ECO:0000250" key="1">
    <source>
        <dbReference type="UniProtKB" id="Q7T292"/>
    </source>
</evidence>
<evidence type="ECO:0000255" key="2"/>
<evidence type="ECO:0000256" key="3">
    <source>
        <dbReference type="SAM" id="MobiDB-lite"/>
    </source>
</evidence>
<evidence type="ECO:0000269" key="4">
    <source>
    </source>
</evidence>
<evidence type="ECO:0000303" key="5">
    <source>
    </source>
</evidence>
<evidence type="ECO:0000303" key="6">
    <source>
    </source>
</evidence>
<evidence type="ECO:0000303" key="7">
    <source ref="2"/>
</evidence>
<evidence type="ECO:0000305" key="8"/>
<evidence type="ECO:0000305" key="9">
    <source>
    </source>
</evidence>
<gene>
    <name type="primary">SLC25A28</name>
    <name type="synonym">MFRN2</name>
    <name type="ORF">NPD016</name>
</gene>
<comment type="function">
    <text evidence="1">Mitochondrial iron transporter that mediates iron uptake. Probably required for heme synthesis of hemoproteins and Fe-S cluster assembly in non-erythroid cells.</text>
</comment>
<comment type="catalytic activity">
    <reaction evidence="1">
        <text>Fe(2+)(in) = Fe(2+)(out)</text>
        <dbReference type="Rhea" id="RHEA:28486"/>
        <dbReference type="ChEBI" id="CHEBI:29033"/>
    </reaction>
</comment>
<comment type="subcellular location">
    <molecule>Isoform 1</molecule>
    <subcellularLocation>
        <location evidence="9">Mitochondrion inner membrane</location>
        <topology evidence="2">Multi-pass membrane protein</topology>
    </subcellularLocation>
</comment>
<comment type="subcellular location">
    <molecule>Isoform 2</molecule>
    <subcellularLocation>
        <location evidence="9">Mitochondrion inner membrane</location>
        <topology evidence="2">Multi-pass membrane protein</topology>
    </subcellularLocation>
</comment>
<comment type="alternative products">
    <event type="alternative splicing"/>
    <isoform>
        <id>Q96A46-1</id>
        <name>1</name>
        <sequence type="displayed"/>
    </isoform>
    <isoform>
        <id>Q96A46-2</id>
        <name>2</name>
        <sequence type="described" ref="VSP_018414"/>
    </isoform>
    <isoform>
        <id>Q96A46-3</id>
        <name>3</name>
        <sequence type="described" ref="VSP_018413 VSP_018415"/>
    </isoform>
</comment>
<comment type="tissue specificity">
    <text evidence="4">Ubiquitous. Expressed in placenta, lung, kidney, pancreas, liver, brain, skeletal muscle and heart.</text>
</comment>
<comment type="similarity">
    <text evidence="8">Belongs to the mitochondrial carrier (TC 2.A.29) family.</text>
</comment>
<comment type="sequence caution" evidence="8">
    <conflict type="erroneous initiation">
        <sequence resource="EMBL-CDS" id="AAH47312"/>
    </conflict>
</comment>
<comment type="sequence caution" evidence="8">
    <conflict type="erroneous initiation">
        <sequence resource="EMBL-CDS" id="AAH47312"/>
    </conflict>
    <text>Extended N-terminus.</text>
</comment>
<proteinExistence type="evidence at protein level"/>
<organism>
    <name type="scientific">Homo sapiens</name>
    <name type="common">Human</name>
    <dbReference type="NCBI Taxonomy" id="9606"/>
    <lineage>
        <taxon>Eukaryota</taxon>
        <taxon>Metazoa</taxon>
        <taxon>Chordata</taxon>
        <taxon>Craniata</taxon>
        <taxon>Vertebrata</taxon>
        <taxon>Euteleostomi</taxon>
        <taxon>Mammalia</taxon>
        <taxon>Eutheria</taxon>
        <taxon>Euarchontoglires</taxon>
        <taxon>Primates</taxon>
        <taxon>Haplorrhini</taxon>
        <taxon>Catarrhini</taxon>
        <taxon>Hominidae</taxon>
        <taxon>Homo</taxon>
    </lineage>
</organism>
<accession>Q96A46</accession>
<accession>Q4VBZ0</accession>
<accession>Q5T777</accession>
<accession>Q86VX5</accession>
<accession>Q969G8</accession>
<accession>Q9H2J3</accession>
<keyword id="KW-0025">Alternative splicing</keyword>
<keyword id="KW-0406">Ion transport</keyword>
<keyword id="KW-0408">Iron</keyword>
<keyword id="KW-0410">Iron transport</keyword>
<keyword id="KW-0472">Membrane</keyword>
<keyword id="KW-0496">Mitochondrion</keyword>
<keyword id="KW-0999">Mitochondrion inner membrane</keyword>
<keyword id="KW-1267">Proteomics identification</keyword>
<keyword id="KW-1185">Reference proteome</keyword>
<keyword id="KW-0677">Repeat</keyword>
<keyword id="KW-0812">Transmembrane</keyword>
<keyword id="KW-1133">Transmembrane helix</keyword>
<keyword id="KW-0813">Transport</keyword>
<protein>
    <recommendedName>
        <fullName>Mitoferrin-2</fullName>
    </recommendedName>
    <alternativeName>
        <fullName>Mitochondrial RNA-splicing protein 3/4 homolog</fullName>
        <shortName>MRS3/4</shortName>
        <shortName>hMRS3/4</shortName>
    </alternativeName>
    <alternativeName>
        <fullName>Mitochondrial iron transporter 2</fullName>
    </alternativeName>
    <alternativeName>
        <fullName>Solute carrier family 25 member 28</fullName>
    </alternativeName>
</protein>
<feature type="chain" id="PRO_0000235255" description="Mitoferrin-2">
    <location>
        <begin position="1"/>
        <end position="364"/>
    </location>
</feature>
<feature type="transmembrane region" description="Helical; Name=1" evidence="2">
    <location>
        <begin position="72"/>
        <end position="91"/>
    </location>
</feature>
<feature type="transmembrane region" description="Helical; Name=2" evidence="2">
    <location>
        <begin position="133"/>
        <end position="152"/>
    </location>
</feature>
<feature type="transmembrane region" description="Helical; Name=3" evidence="2">
    <location>
        <begin position="170"/>
        <end position="189"/>
    </location>
</feature>
<feature type="transmembrane region" description="Helical; Name=4" evidence="2">
    <location>
        <begin position="227"/>
        <end position="246"/>
    </location>
</feature>
<feature type="transmembrane region" description="Helical; Name=5" evidence="2">
    <location>
        <begin position="261"/>
        <end position="280"/>
    </location>
</feature>
<feature type="transmembrane region" description="Helical; Name=6" evidence="2">
    <location>
        <begin position="327"/>
        <end position="346"/>
    </location>
</feature>
<feature type="repeat" description="Solcar 1">
    <location>
        <begin position="70"/>
        <end position="158"/>
    </location>
</feature>
<feature type="repeat" description="Solcar 2">
    <location>
        <begin position="168"/>
        <end position="252"/>
    </location>
</feature>
<feature type="repeat" description="Solcar 3">
    <location>
        <begin position="259"/>
        <end position="352"/>
    </location>
</feature>
<feature type="region of interest" description="Disordered" evidence="3">
    <location>
        <begin position="1"/>
        <end position="28"/>
    </location>
</feature>
<feature type="region of interest" description="Disordered" evidence="3">
    <location>
        <begin position="40"/>
        <end position="60"/>
    </location>
</feature>
<feature type="compositionally biased region" description="Gly residues" evidence="3">
    <location>
        <begin position="1"/>
        <end position="17"/>
    </location>
</feature>
<feature type="compositionally biased region" description="Low complexity" evidence="3">
    <location>
        <begin position="18"/>
        <end position="27"/>
    </location>
</feature>
<feature type="splice variant" id="VSP_018413" description="In isoform 3." evidence="6 7">
    <location>
        <begin position="1"/>
        <end position="188"/>
    </location>
</feature>
<feature type="splice variant" id="VSP_018414" description="In isoform 2." evidence="5">
    <location>
        <begin position="1"/>
        <end position="187"/>
    </location>
</feature>
<feature type="splice variant" id="VSP_018415" description="In isoform 3." evidence="6 7">
    <original>NPAE</original>
    <variation>MALL</variation>
    <location>
        <begin position="189"/>
        <end position="192"/>
    </location>
</feature>
<reference key="1">
    <citation type="journal article" date="2001" name="FEBS Lett.">
        <title>Characterization of a novel human putative mitochondrial transporter homologous to the yeast mitochondrial RNA splicing proteins 3 and 4.</title>
        <authorList>
            <person name="Li F.-Y."/>
            <person name="Nikali K."/>
            <person name="Gregan J."/>
            <person name="Leibiger I."/>
            <person name="Leibiger B."/>
            <person name="Schweyen R."/>
            <person name="Larsson C."/>
            <person name="Suomalainen A."/>
        </authorList>
    </citation>
    <scope>NUCLEOTIDE SEQUENCE [MRNA] (ISOFORMS 1 AND 2)</scope>
    <scope>SUBCELLULAR LOCATION</scope>
    <scope>TISSUE SPECIFICITY</scope>
</reference>
<reference key="2">
    <citation type="submission" date="2000-05" db="EMBL/GenBank/DDBJ databases">
        <authorList>
            <person name="Xu X."/>
            <person name="Yang Y."/>
            <person name="Gao G."/>
            <person name="Xiao H."/>
            <person name="Chen Z."/>
            <person name="Han Z."/>
        </authorList>
    </citation>
    <scope>NUCLEOTIDE SEQUENCE [LARGE SCALE MRNA] (ISOFORM 3)</scope>
    <source>
        <tissue>Pituitary</tissue>
    </source>
</reference>
<reference key="3">
    <citation type="journal article" date="2007" name="BMC Genomics">
        <title>The full-ORF clone resource of the German cDNA consortium.</title>
        <authorList>
            <person name="Bechtel S."/>
            <person name="Rosenfelder H."/>
            <person name="Duda A."/>
            <person name="Schmidt C.P."/>
            <person name="Ernst U."/>
            <person name="Wellenreuther R."/>
            <person name="Mehrle A."/>
            <person name="Schuster C."/>
            <person name="Bahr A."/>
            <person name="Bloecker H."/>
            <person name="Heubner D."/>
            <person name="Hoerlein A."/>
            <person name="Michel G."/>
            <person name="Wedler H."/>
            <person name="Koehrer K."/>
            <person name="Ottenwaelder B."/>
            <person name="Poustka A."/>
            <person name="Wiemann S."/>
            <person name="Schupp I."/>
        </authorList>
    </citation>
    <scope>NUCLEOTIDE SEQUENCE [LARGE SCALE MRNA] (ISOFORM 3)</scope>
    <source>
        <tissue>Brain</tissue>
    </source>
</reference>
<reference key="4">
    <citation type="journal article" date="2004" name="Nature">
        <title>The DNA sequence and comparative analysis of human chromosome 10.</title>
        <authorList>
            <person name="Deloukas P."/>
            <person name="Earthrowl M.E."/>
            <person name="Grafham D.V."/>
            <person name="Rubenfield M."/>
            <person name="French L."/>
            <person name="Steward C.A."/>
            <person name="Sims S.K."/>
            <person name="Jones M.C."/>
            <person name="Searle S."/>
            <person name="Scott C."/>
            <person name="Howe K."/>
            <person name="Hunt S.E."/>
            <person name="Andrews T.D."/>
            <person name="Gilbert J.G.R."/>
            <person name="Swarbreck D."/>
            <person name="Ashurst J.L."/>
            <person name="Taylor A."/>
            <person name="Battles J."/>
            <person name="Bird C.P."/>
            <person name="Ainscough R."/>
            <person name="Almeida J.P."/>
            <person name="Ashwell R.I.S."/>
            <person name="Ambrose K.D."/>
            <person name="Babbage A.K."/>
            <person name="Bagguley C.L."/>
            <person name="Bailey J."/>
            <person name="Banerjee R."/>
            <person name="Bates K."/>
            <person name="Beasley H."/>
            <person name="Bray-Allen S."/>
            <person name="Brown A.J."/>
            <person name="Brown J.Y."/>
            <person name="Burford D.C."/>
            <person name="Burrill W."/>
            <person name="Burton J."/>
            <person name="Cahill P."/>
            <person name="Camire D."/>
            <person name="Carter N.P."/>
            <person name="Chapman J.C."/>
            <person name="Clark S.Y."/>
            <person name="Clarke G."/>
            <person name="Clee C.M."/>
            <person name="Clegg S."/>
            <person name="Corby N."/>
            <person name="Coulson A."/>
            <person name="Dhami P."/>
            <person name="Dutta I."/>
            <person name="Dunn M."/>
            <person name="Faulkner L."/>
            <person name="Frankish A."/>
            <person name="Frankland J.A."/>
            <person name="Garner P."/>
            <person name="Garnett J."/>
            <person name="Gribble S."/>
            <person name="Griffiths C."/>
            <person name="Grocock R."/>
            <person name="Gustafson E."/>
            <person name="Hammond S."/>
            <person name="Harley J.L."/>
            <person name="Hart E."/>
            <person name="Heath P.D."/>
            <person name="Ho T.P."/>
            <person name="Hopkins B."/>
            <person name="Horne J."/>
            <person name="Howden P.J."/>
            <person name="Huckle E."/>
            <person name="Hynds C."/>
            <person name="Johnson C."/>
            <person name="Johnson D."/>
            <person name="Kana A."/>
            <person name="Kay M."/>
            <person name="Kimberley A.M."/>
            <person name="Kershaw J.K."/>
            <person name="Kokkinaki M."/>
            <person name="Laird G.K."/>
            <person name="Lawlor S."/>
            <person name="Lee H.M."/>
            <person name="Leongamornlert D.A."/>
            <person name="Laird G."/>
            <person name="Lloyd C."/>
            <person name="Lloyd D.M."/>
            <person name="Loveland J."/>
            <person name="Lovell J."/>
            <person name="McLaren S."/>
            <person name="McLay K.E."/>
            <person name="McMurray A."/>
            <person name="Mashreghi-Mohammadi M."/>
            <person name="Matthews L."/>
            <person name="Milne S."/>
            <person name="Nickerson T."/>
            <person name="Nguyen M."/>
            <person name="Overton-Larty E."/>
            <person name="Palmer S.A."/>
            <person name="Pearce A.V."/>
            <person name="Peck A.I."/>
            <person name="Pelan S."/>
            <person name="Phillimore B."/>
            <person name="Porter K."/>
            <person name="Rice C.M."/>
            <person name="Rogosin A."/>
            <person name="Ross M.T."/>
            <person name="Sarafidou T."/>
            <person name="Sehra H.K."/>
            <person name="Shownkeen R."/>
            <person name="Skuce C.D."/>
            <person name="Smith M."/>
            <person name="Standring L."/>
            <person name="Sycamore N."/>
            <person name="Tester J."/>
            <person name="Thorpe A."/>
            <person name="Torcasso W."/>
            <person name="Tracey A."/>
            <person name="Tromans A."/>
            <person name="Tsolas J."/>
            <person name="Wall M."/>
            <person name="Walsh J."/>
            <person name="Wang H."/>
            <person name="Weinstock K."/>
            <person name="West A.P."/>
            <person name="Willey D.L."/>
            <person name="Whitehead S.L."/>
            <person name="Wilming L."/>
            <person name="Wray P.W."/>
            <person name="Young L."/>
            <person name="Chen Y."/>
            <person name="Lovering R.C."/>
            <person name="Moschonas N.K."/>
            <person name="Siebert R."/>
            <person name="Fechtel K."/>
            <person name="Bentley D."/>
            <person name="Durbin R.M."/>
            <person name="Hubbard T."/>
            <person name="Doucette-Stamm L."/>
            <person name="Beck S."/>
            <person name="Smith D.R."/>
            <person name="Rogers J."/>
        </authorList>
    </citation>
    <scope>NUCLEOTIDE SEQUENCE [LARGE SCALE GENOMIC DNA]</scope>
</reference>
<reference key="5">
    <citation type="journal article" date="2004" name="Genome Res.">
        <title>The status, quality, and expansion of the NIH full-length cDNA project: the Mammalian Gene Collection (MGC).</title>
        <authorList>
            <consortium name="The MGC Project Team"/>
        </authorList>
    </citation>
    <scope>NUCLEOTIDE SEQUENCE [LARGE SCALE MRNA] (ISOFORM 1)</scope>
    <source>
        <tissue>Brain</tissue>
        <tissue>Eye</tissue>
        <tissue>Salivary gland</tissue>
    </source>
</reference>
<sequence>MELEGRGAGGVAGGPAAGPGRSPGESALLDGWLQRGVGRGAGGGEAGACRPPVRQDPDSGPDYEALPAGATVTTHMVAGAVAGILEHCVMYPIDCVKTRMQSLQPDPAARYRNVLEALWRIIRTEGLWRPMRGLNVTATGAGPAHALYFACYEKLKKTLSDVIHPGGNSHIANGAAGCVATLLHDAAMNPAEVVKQRMQMYNSPYHRVTDCVRAVWQNEGAGAFYRSYTTQLTMNVPFQAIHFMTYEFLQEHFNPQRRYNPSSHVLSGACAGAVAAAATTPLDVCKTLLNTQESLALNSHITGHITGMASAFRTVYQVGGVTAYFRGVQARVIYQIPSTAIAWSVYEFFKYLITKRQEEWRAGK</sequence>